<organismHost>
    <name type="scientific">Gallus gallus</name>
    <name type="common">Chicken</name>
    <dbReference type="NCBI Taxonomy" id="9031"/>
</organismHost>
<organism>
    <name type="scientific">Gallid herpesvirus 2 (strain Chicken/Md5/ATCC VR-987)</name>
    <name type="common">GaHV-2</name>
    <name type="synonym">Marek's disease herpesvirus type 1</name>
    <dbReference type="NCBI Taxonomy" id="10389"/>
    <lineage>
        <taxon>Viruses</taxon>
        <taxon>Duplodnaviria</taxon>
        <taxon>Heunggongvirae</taxon>
        <taxon>Peploviricota</taxon>
        <taxon>Herviviricetes</taxon>
        <taxon>Herpesvirales</taxon>
        <taxon>Orthoherpesviridae</taxon>
        <taxon>Alphaherpesvirinae</taxon>
        <taxon>Mardivirus</taxon>
        <taxon>Mardivirus gallidalpha2</taxon>
        <taxon>Gallid alphaherpesvirus 2</taxon>
    </lineage>
</organism>
<feature type="chain" id="PRO_0000406539" description="Uncharacterized gene 87 protein">
    <location>
        <begin position="1"/>
        <end position="179"/>
    </location>
</feature>
<feature type="region of interest" description="Disordered" evidence="1">
    <location>
        <begin position="1"/>
        <end position="32"/>
    </location>
</feature>
<feature type="compositionally biased region" description="Basic and acidic residues" evidence="1">
    <location>
        <begin position="1"/>
        <end position="15"/>
    </location>
</feature>
<proteinExistence type="predicted"/>
<gene>
    <name type="primary">MDV087</name>
</gene>
<accession>Q77MQ0</accession>
<dbReference type="EMBL" id="AF243438">
    <property type="protein sequence ID" value="AAG14261.1"/>
    <property type="molecule type" value="Genomic_DNA"/>
</dbReference>
<dbReference type="RefSeq" id="YP_001034004.1">
    <property type="nucleotide sequence ID" value="NC_002229.3"/>
</dbReference>
<dbReference type="GeneID" id="4811542"/>
<dbReference type="KEGG" id="vg:4811542"/>
<dbReference type="Proteomes" id="UP000008072">
    <property type="component" value="Segment"/>
</dbReference>
<dbReference type="InterPro" id="IPR003360">
    <property type="entry name" value="US22-like"/>
</dbReference>
<dbReference type="Pfam" id="PF02393">
    <property type="entry name" value="US22"/>
    <property type="match status" value="1"/>
</dbReference>
<evidence type="ECO:0000256" key="1">
    <source>
        <dbReference type="SAM" id="MobiDB-lite"/>
    </source>
</evidence>
<sequence length="179" mass="20055">MQRQTGHMEDKKRTGLESQGTENAFSDGRDGKDGLLHEGINEPILIPSTIADLEGIRELVRKFRGRLLPFEKCPDFCLRIGGLEASFHKGQEELLEYCEALYLPQPVKMEIVGIVDDVPCLATGMQLLILVAEGGEVYAYEEDTLHKLATSFSEFLEIGVKSLGREVYHCGEYIEQVVH</sequence>
<name>VG87_GAHVM</name>
<protein>
    <recommendedName>
        <fullName>Uncharacterized gene 87 protein</fullName>
    </recommendedName>
</protein>
<keyword id="KW-1185">Reference proteome</keyword>
<reference key="1">
    <citation type="journal article" date="2000" name="J. Virol.">
        <title>The genome of a very virulent Marek's disease virus.</title>
        <authorList>
            <person name="Tulman E.R."/>
            <person name="Afonso C.L."/>
            <person name="Lu Z."/>
            <person name="Zsak L."/>
            <person name="Rock D.L."/>
            <person name="Kutish G.F."/>
        </authorList>
    </citation>
    <scope>NUCLEOTIDE SEQUENCE [LARGE SCALE GENOMIC DNA]</scope>
</reference>